<protein>
    <recommendedName>
        <fullName evidence="1">Uroporphyrinogen decarboxylase</fullName>
        <shortName evidence="1">UPD</shortName>
        <shortName evidence="1">URO-D</shortName>
        <ecNumber evidence="1">4.1.1.37</ecNumber>
    </recommendedName>
</protein>
<organism>
    <name type="scientific">Flavobacterium johnsoniae (strain ATCC 17061 / DSM 2064 / JCM 8514 / BCRC 14874 / CCUG 350202 / NBRC 14942 / NCIMB 11054 / UW101)</name>
    <name type="common">Cytophaga johnsonae</name>
    <dbReference type="NCBI Taxonomy" id="376686"/>
    <lineage>
        <taxon>Bacteria</taxon>
        <taxon>Pseudomonadati</taxon>
        <taxon>Bacteroidota</taxon>
        <taxon>Flavobacteriia</taxon>
        <taxon>Flavobacteriales</taxon>
        <taxon>Flavobacteriaceae</taxon>
        <taxon>Flavobacterium</taxon>
    </lineage>
</organism>
<keyword id="KW-0963">Cytoplasm</keyword>
<keyword id="KW-0210">Decarboxylase</keyword>
<keyword id="KW-0456">Lyase</keyword>
<keyword id="KW-0627">Porphyrin biosynthesis</keyword>
<feature type="chain" id="PRO_1000078073" description="Uroporphyrinogen decarboxylase">
    <location>
        <begin position="1"/>
        <end position="341"/>
    </location>
</feature>
<feature type="binding site" evidence="1">
    <location>
        <begin position="25"/>
        <end position="29"/>
    </location>
    <ligand>
        <name>substrate</name>
    </ligand>
</feature>
<feature type="binding site" evidence="1">
    <location>
        <position position="44"/>
    </location>
    <ligand>
        <name>substrate</name>
    </ligand>
</feature>
<feature type="binding site" evidence="1">
    <location>
        <position position="74"/>
    </location>
    <ligand>
        <name>substrate</name>
    </ligand>
</feature>
<feature type="binding site" evidence="1">
    <location>
        <position position="151"/>
    </location>
    <ligand>
        <name>substrate</name>
    </ligand>
</feature>
<feature type="binding site" evidence="1">
    <location>
        <position position="206"/>
    </location>
    <ligand>
        <name>substrate</name>
    </ligand>
</feature>
<feature type="binding site" evidence="1">
    <location>
        <position position="318"/>
    </location>
    <ligand>
        <name>substrate</name>
    </ligand>
</feature>
<feature type="site" description="Transition state stabilizer" evidence="1">
    <location>
        <position position="74"/>
    </location>
</feature>
<gene>
    <name evidence="1" type="primary">hemE</name>
    <name type="ordered locus">Fjoh_0946</name>
</gene>
<sequence length="341" mass="38125">MLKNDLFLKALKGETVQRPPVWMMRQAGRYLPEFIELRDKYDFFTRCQTPELAAEITVQPIRRIAPDAAILFSDILVVPQAMGIEVLMKENIGPFIPNPIRSMADVQRVYVPDIQESLGYVMDAIKLTKEMLNDEVPLIGFAGSPWTIFCYAVEGRGSKSFDMAKGFCFSNPVAAHTLLQKITDTTILYLKEKVKAGVDAVQIFDSWGGMLSPVDYQEFSWKYINQIVEALADLTPVIVFGKGCWFALGEMGKSRASALGVDWTCSARNARYLSGGNITLQGNFDPSRLLSPIPTIKKMVHEMIDEFGKDKYVVNLGHGILPNIPVDHAKAFIDAVKEYGQ</sequence>
<accession>A5FLE7</accession>
<evidence type="ECO:0000255" key="1">
    <source>
        <dbReference type="HAMAP-Rule" id="MF_00218"/>
    </source>
</evidence>
<reference key="1">
    <citation type="journal article" date="2009" name="Appl. Environ. Microbiol.">
        <title>Novel features of the polysaccharide-digesting gliding bacterium Flavobacterium johnsoniae as revealed by genome sequence analysis.</title>
        <authorList>
            <person name="McBride M.J."/>
            <person name="Xie G."/>
            <person name="Martens E.C."/>
            <person name="Lapidus A."/>
            <person name="Henrissat B."/>
            <person name="Rhodes R.G."/>
            <person name="Goltsman E."/>
            <person name="Wang W."/>
            <person name="Xu J."/>
            <person name="Hunnicutt D.W."/>
            <person name="Staroscik A.M."/>
            <person name="Hoover T.R."/>
            <person name="Cheng Y.Q."/>
            <person name="Stein J.L."/>
        </authorList>
    </citation>
    <scope>NUCLEOTIDE SEQUENCE [LARGE SCALE GENOMIC DNA]</scope>
    <source>
        <strain>ATCC 17061 / DSM 2064 / JCM 8514 / BCRC 14874 / CCUG 350202 / NBRC 14942 / NCIMB 11054 / UW101</strain>
    </source>
</reference>
<comment type="function">
    <text evidence="1">Catalyzes the decarboxylation of four acetate groups of uroporphyrinogen-III to yield coproporphyrinogen-III.</text>
</comment>
<comment type="catalytic activity">
    <reaction evidence="1">
        <text>uroporphyrinogen III + 4 H(+) = coproporphyrinogen III + 4 CO2</text>
        <dbReference type="Rhea" id="RHEA:19865"/>
        <dbReference type="ChEBI" id="CHEBI:15378"/>
        <dbReference type="ChEBI" id="CHEBI:16526"/>
        <dbReference type="ChEBI" id="CHEBI:57308"/>
        <dbReference type="ChEBI" id="CHEBI:57309"/>
        <dbReference type="EC" id="4.1.1.37"/>
    </reaction>
</comment>
<comment type="pathway">
    <text evidence="1">Porphyrin-containing compound metabolism; protoporphyrin-IX biosynthesis; coproporphyrinogen-III from 5-aminolevulinate: step 4/4.</text>
</comment>
<comment type="subunit">
    <text evidence="1">Homodimer.</text>
</comment>
<comment type="subcellular location">
    <subcellularLocation>
        <location evidence="1">Cytoplasm</location>
    </subcellularLocation>
</comment>
<comment type="similarity">
    <text evidence="1">Belongs to the uroporphyrinogen decarboxylase family.</text>
</comment>
<dbReference type="EC" id="4.1.1.37" evidence="1"/>
<dbReference type="EMBL" id="CP000685">
    <property type="protein sequence ID" value="ABQ03980.1"/>
    <property type="molecule type" value="Genomic_DNA"/>
</dbReference>
<dbReference type="RefSeq" id="WP_012023033.1">
    <property type="nucleotide sequence ID" value="NC_009441.1"/>
</dbReference>
<dbReference type="SMR" id="A5FLE7"/>
<dbReference type="STRING" id="376686.Fjoh_0946"/>
<dbReference type="KEGG" id="fjo:Fjoh_0946"/>
<dbReference type="eggNOG" id="COG0407">
    <property type="taxonomic scope" value="Bacteria"/>
</dbReference>
<dbReference type="HOGENOM" id="CLU_040933_0_0_10"/>
<dbReference type="OrthoDB" id="9806656at2"/>
<dbReference type="UniPathway" id="UPA00251">
    <property type="reaction ID" value="UER00321"/>
</dbReference>
<dbReference type="Proteomes" id="UP000006694">
    <property type="component" value="Chromosome"/>
</dbReference>
<dbReference type="GO" id="GO:0005829">
    <property type="term" value="C:cytosol"/>
    <property type="evidence" value="ECO:0007669"/>
    <property type="project" value="TreeGrafter"/>
</dbReference>
<dbReference type="GO" id="GO:0004853">
    <property type="term" value="F:uroporphyrinogen decarboxylase activity"/>
    <property type="evidence" value="ECO:0007669"/>
    <property type="project" value="UniProtKB-UniRule"/>
</dbReference>
<dbReference type="GO" id="GO:0006782">
    <property type="term" value="P:protoporphyrinogen IX biosynthetic process"/>
    <property type="evidence" value="ECO:0007669"/>
    <property type="project" value="UniProtKB-UniRule"/>
</dbReference>
<dbReference type="CDD" id="cd00717">
    <property type="entry name" value="URO-D"/>
    <property type="match status" value="1"/>
</dbReference>
<dbReference type="FunFam" id="3.20.20.210:FF:000008">
    <property type="entry name" value="Uroporphyrinogen decarboxylase"/>
    <property type="match status" value="1"/>
</dbReference>
<dbReference type="Gene3D" id="3.20.20.210">
    <property type="match status" value="1"/>
</dbReference>
<dbReference type="HAMAP" id="MF_00218">
    <property type="entry name" value="URO_D"/>
    <property type="match status" value="1"/>
</dbReference>
<dbReference type="InterPro" id="IPR038071">
    <property type="entry name" value="UROD/MetE-like_sf"/>
</dbReference>
<dbReference type="InterPro" id="IPR006361">
    <property type="entry name" value="Uroporphyrinogen_deCO2ase_HemE"/>
</dbReference>
<dbReference type="InterPro" id="IPR000257">
    <property type="entry name" value="Uroporphyrinogen_deCOase"/>
</dbReference>
<dbReference type="NCBIfam" id="TIGR01464">
    <property type="entry name" value="hemE"/>
    <property type="match status" value="1"/>
</dbReference>
<dbReference type="PANTHER" id="PTHR21091">
    <property type="entry name" value="METHYLTETRAHYDROFOLATE:HOMOCYSTEINE METHYLTRANSFERASE RELATED"/>
    <property type="match status" value="1"/>
</dbReference>
<dbReference type="PANTHER" id="PTHR21091:SF169">
    <property type="entry name" value="UROPORPHYRINOGEN DECARBOXYLASE"/>
    <property type="match status" value="1"/>
</dbReference>
<dbReference type="Pfam" id="PF01208">
    <property type="entry name" value="URO-D"/>
    <property type="match status" value="1"/>
</dbReference>
<dbReference type="SUPFAM" id="SSF51726">
    <property type="entry name" value="UROD/MetE-like"/>
    <property type="match status" value="1"/>
</dbReference>
<dbReference type="PROSITE" id="PS00906">
    <property type="entry name" value="UROD_1"/>
    <property type="match status" value="1"/>
</dbReference>
<dbReference type="PROSITE" id="PS00907">
    <property type="entry name" value="UROD_2"/>
    <property type="match status" value="1"/>
</dbReference>
<proteinExistence type="inferred from homology"/>
<name>DCUP_FLAJ1</name>